<organism>
    <name type="scientific">Dickeya chrysanthemi</name>
    <name type="common">Pectobacterium chrysanthemi</name>
    <name type="synonym">Erwinia chrysanthemi</name>
    <dbReference type="NCBI Taxonomy" id="556"/>
    <lineage>
        <taxon>Bacteria</taxon>
        <taxon>Pseudomonadati</taxon>
        <taxon>Pseudomonadota</taxon>
        <taxon>Gammaproteobacteria</taxon>
        <taxon>Enterobacterales</taxon>
        <taxon>Pectobacteriaceae</taxon>
        <taxon>Dickeya</taxon>
    </lineage>
</organism>
<proteinExistence type="inferred from homology"/>
<gene>
    <name type="primary">arbB</name>
</gene>
<name>ARBB_DICCH</name>
<evidence type="ECO:0000255" key="1"/>
<evidence type="ECO:0000255" key="2">
    <source>
        <dbReference type="PROSITE-ProRule" id="PRU10055"/>
    </source>
</evidence>
<evidence type="ECO:0000305" key="3"/>
<accession>P26206</accession>
<comment type="catalytic activity">
    <reaction>
        <text>6-phospho-beta-D-glucosyl-(1-&gt;4)-D-glucose + H2O = D-glucose 6-phosphate + D-glucose</text>
        <dbReference type="Rhea" id="RHEA:10772"/>
        <dbReference type="ChEBI" id="CHEBI:4167"/>
        <dbReference type="ChEBI" id="CHEBI:15377"/>
        <dbReference type="ChEBI" id="CHEBI:58312"/>
        <dbReference type="ChEBI" id="CHEBI:61548"/>
        <dbReference type="EC" id="3.2.1.86"/>
    </reaction>
</comment>
<comment type="pathway">
    <text>Carbohydrate metabolism; beta-glucoside metabolism.</text>
</comment>
<comment type="similarity">
    <text evidence="3">Belongs to the glycosyl hydrolase 1 family.</text>
</comment>
<keyword id="KW-0326">Glycosidase</keyword>
<keyword id="KW-0378">Hydrolase</keyword>
<reference key="1">
    <citation type="journal article" date="1992" name="J. Bacteriol.">
        <title>Nucleotide sequences of the arb genes, which control beta-glucoside utilization in Erwinia chrysanthemi: comparison with the Escherichia coli bgl operon and evidence for a new beta-glycohydrolase family including enzymes from eubacteria, archeabacteria, and humans.</title>
        <authorList>
            <person name="el Hassouni M."/>
            <person name="Henrissat B."/>
            <person name="Chippaux M."/>
            <person name="Barras F."/>
        </authorList>
    </citation>
    <scope>NUCLEOTIDE SEQUENCE [GENOMIC DNA]</scope>
</reference>
<protein>
    <recommendedName>
        <fullName>6-phospho-beta-glucosidase</fullName>
        <ecNumber>3.2.1.86</ecNumber>
    </recommendedName>
</protein>
<feature type="chain" id="PRO_0000063899" description="6-phospho-beta-glucosidase">
    <location>
        <begin position="1"/>
        <end position="465"/>
    </location>
</feature>
<feature type="active site" description="Proton donor" evidence="1">
    <location>
        <position position="173"/>
    </location>
</feature>
<feature type="active site" description="Nucleophile" evidence="2">
    <location>
        <position position="362"/>
    </location>
</feature>
<dbReference type="EC" id="3.2.1.86"/>
<dbReference type="EMBL" id="M81772">
    <property type="protein sequence ID" value="AAA24815.1"/>
    <property type="molecule type" value="Genomic_DNA"/>
</dbReference>
<dbReference type="PIR" id="C42603">
    <property type="entry name" value="C42603"/>
</dbReference>
<dbReference type="SMR" id="P26206"/>
<dbReference type="CAZy" id="GH1">
    <property type="family name" value="Glycoside Hydrolase Family 1"/>
</dbReference>
<dbReference type="UniPathway" id="UPA00237"/>
<dbReference type="GO" id="GO:0005829">
    <property type="term" value="C:cytosol"/>
    <property type="evidence" value="ECO:0007669"/>
    <property type="project" value="TreeGrafter"/>
</dbReference>
<dbReference type="GO" id="GO:0008706">
    <property type="term" value="F:6-phospho-beta-glucosidase activity"/>
    <property type="evidence" value="ECO:0007669"/>
    <property type="project" value="UniProtKB-EC"/>
</dbReference>
<dbReference type="GO" id="GO:0016052">
    <property type="term" value="P:carbohydrate catabolic process"/>
    <property type="evidence" value="ECO:0007669"/>
    <property type="project" value="TreeGrafter"/>
</dbReference>
<dbReference type="FunFam" id="3.20.20.80:FF:000004">
    <property type="entry name" value="Beta-glucosidase 6-phospho-beta-glucosidase"/>
    <property type="match status" value="1"/>
</dbReference>
<dbReference type="Gene3D" id="3.20.20.80">
    <property type="entry name" value="Glycosidases"/>
    <property type="match status" value="1"/>
</dbReference>
<dbReference type="InterPro" id="IPR001360">
    <property type="entry name" value="Glyco_hydro_1"/>
</dbReference>
<dbReference type="InterPro" id="IPR018120">
    <property type="entry name" value="Glyco_hydro_1_AS"/>
</dbReference>
<dbReference type="InterPro" id="IPR033132">
    <property type="entry name" value="Glyco_hydro_1_N_CS"/>
</dbReference>
<dbReference type="InterPro" id="IPR017853">
    <property type="entry name" value="Glycoside_hydrolase_SF"/>
</dbReference>
<dbReference type="NCBIfam" id="NF007356">
    <property type="entry name" value="PRK09852.1"/>
    <property type="match status" value="1"/>
</dbReference>
<dbReference type="PANTHER" id="PTHR10353:SF122">
    <property type="entry name" value="6-PHOSPHO-BETA-GLUCOSIDASE ASCB-RELATED"/>
    <property type="match status" value="1"/>
</dbReference>
<dbReference type="PANTHER" id="PTHR10353">
    <property type="entry name" value="GLYCOSYL HYDROLASE"/>
    <property type="match status" value="1"/>
</dbReference>
<dbReference type="Pfam" id="PF00232">
    <property type="entry name" value="Glyco_hydro_1"/>
    <property type="match status" value="1"/>
</dbReference>
<dbReference type="PRINTS" id="PR00131">
    <property type="entry name" value="GLHYDRLASE1"/>
</dbReference>
<dbReference type="SUPFAM" id="SSF51445">
    <property type="entry name" value="(Trans)glycosidases"/>
    <property type="match status" value="1"/>
</dbReference>
<dbReference type="PROSITE" id="PS00572">
    <property type="entry name" value="GLYCOSYL_HYDROL_F1_1"/>
    <property type="match status" value="1"/>
</dbReference>
<dbReference type="PROSITE" id="PS00653">
    <property type="entry name" value="GLYCOSYL_HYDROL_F1_2"/>
    <property type="match status" value="1"/>
</dbReference>
<sequence>MSNPFPAHFLWGGAIAANQVEGAYLTDGKGLSTSDLQPQGIFGEIVTRQPGDSGIKDVAIDFYHRYPQDIALFAEMGFTCLRISIAWTRIFPQGDEAEPNEAGLAFYDRLFDELAKYGIQPLVTLSHYEMPYGLVEKHGGWGNRLTIDCFERYARTVFARYRHKVKRWLTFNEINMSLHAPFTGVGLPPDSDKAAIYQAIHHQLVASARAVKACHDMIPDAQIGNMLLGAMLYPLTSKPEDVMESLHQNREWLFFGDVQVRGAYPGYMHRYFREQGITLNITAQDKQDLKATVDFISFSYYMTGCVTTDEAQLEKTRGNILNMVPNPYLESSEWGWQIDPLGLRYLLNFLYDRYQKPLFIVENGLGAKDKIEENGDIYDDYRIRYLNDHLVQVGEAIDDGVEVLGYTCWGPIDLVSASKAEMSKRYGFIYVDRDDAGHGSLERRRKKSFYWYQSVIASHGKTLTR</sequence>